<evidence type="ECO:0000250" key="1">
    <source>
        <dbReference type="UniProtKB" id="P0DN70"/>
    </source>
</evidence>
<evidence type="ECO:0000255" key="2">
    <source>
        <dbReference type="PROSITE-ProRule" id="PRU00490"/>
    </source>
</evidence>
<evidence type="ECO:0000305" key="3"/>
<sequence>MPSSFDLLGEMIGLLQTEQLTSSLACPLPNALTKRQDLWRALINQRPALPLSKDYLNLEDAYLDDWRASFVPVSVKDCQKTNYTSLFLYHGDIRYLAVDAIVNAANSELLGCFIPNHGCIDNAIHTFAGSRLRLACQAIMTEQGRKEAIGQAKLTSAYHLPASYIIHTVGPRITKGRHVSPIRADLLARCYRSSLDLAVKAGLTSLAFCSISTGEFGFPKKEAAQIAIKTVLKWQAEHPESKTLTVIFNTFTSEDKALYDTYLQKENNCE</sequence>
<dbReference type="EC" id="3.2.1.-" evidence="1"/>
<dbReference type="EMBL" id="CP000003">
    <property type="protein sequence ID" value="AAT87054.1"/>
    <property type="molecule type" value="Genomic_DNA"/>
</dbReference>
<dbReference type="RefSeq" id="WP_011184542.1">
    <property type="nucleotide sequence ID" value="NC_006086.1"/>
</dbReference>
<dbReference type="SMR" id="Q5XC09"/>
<dbReference type="KEGG" id="spa:M6_Spy0919"/>
<dbReference type="HOGENOM" id="CLU_046550_2_1_9"/>
<dbReference type="Proteomes" id="UP000001167">
    <property type="component" value="Chromosome"/>
</dbReference>
<dbReference type="GO" id="GO:0004649">
    <property type="term" value="F:poly(ADP-ribose) glycohydrolase activity"/>
    <property type="evidence" value="ECO:0000250"/>
    <property type="project" value="UniProtKB"/>
</dbReference>
<dbReference type="CDD" id="cd02908">
    <property type="entry name" value="Macro_OAADPr_deacetylase"/>
    <property type="match status" value="1"/>
</dbReference>
<dbReference type="FunFam" id="3.40.220.10:FF:000018">
    <property type="entry name" value="Protein-ADP-ribose hydrolase"/>
    <property type="match status" value="1"/>
</dbReference>
<dbReference type="Gene3D" id="3.40.220.10">
    <property type="entry name" value="Leucine Aminopeptidase, subunit E, domain 1"/>
    <property type="match status" value="1"/>
</dbReference>
<dbReference type="InterPro" id="IPR002589">
    <property type="entry name" value="Macro_dom"/>
</dbReference>
<dbReference type="InterPro" id="IPR043472">
    <property type="entry name" value="Macro_dom-like"/>
</dbReference>
<dbReference type="NCBIfam" id="NF003163">
    <property type="entry name" value="PRK04143.1"/>
    <property type="match status" value="1"/>
</dbReference>
<dbReference type="PANTHER" id="PTHR11106:SF121">
    <property type="entry name" value="ADP-RIBOSE 1''-PHOSPHATE PHOSPHATASE"/>
    <property type="match status" value="1"/>
</dbReference>
<dbReference type="PANTHER" id="PTHR11106">
    <property type="entry name" value="GANGLIOSIDE INDUCED DIFFERENTIATION ASSOCIATED PROTEIN 2-RELATED"/>
    <property type="match status" value="1"/>
</dbReference>
<dbReference type="Pfam" id="PF01661">
    <property type="entry name" value="Macro"/>
    <property type="match status" value="1"/>
</dbReference>
<dbReference type="SMART" id="SM00506">
    <property type="entry name" value="A1pp"/>
    <property type="match status" value="1"/>
</dbReference>
<dbReference type="SUPFAM" id="SSF52949">
    <property type="entry name" value="Macro domain-like"/>
    <property type="match status" value="1"/>
</dbReference>
<dbReference type="PROSITE" id="PS51154">
    <property type="entry name" value="MACRO"/>
    <property type="match status" value="1"/>
</dbReference>
<protein>
    <recommendedName>
        <fullName evidence="1">Protein-ADP-ribose hydrolase</fullName>
        <ecNumber evidence="1">3.2.1.-</ecNumber>
    </recommendedName>
</protein>
<feature type="chain" id="PRO_0000089219" description="Protein-ADP-ribose hydrolase">
    <location>
        <begin position="1"/>
        <end position="270"/>
    </location>
</feature>
<feature type="domain" description="Macro" evidence="2">
    <location>
        <begin position="73"/>
        <end position="267"/>
    </location>
</feature>
<feature type="binding site" evidence="1">
    <location>
        <position position="92"/>
    </location>
    <ligand>
        <name>ADP-D-ribose</name>
        <dbReference type="ChEBI" id="CHEBI:57967"/>
    </ligand>
</feature>
<feature type="binding site" evidence="1">
    <location>
        <position position="93"/>
    </location>
    <ligand>
        <name>ADP-D-ribose</name>
        <dbReference type="ChEBI" id="CHEBI:57967"/>
    </ligand>
</feature>
<feature type="binding site" evidence="1">
    <location>
        <position position="106"/>
    </location>
    <ligand>
        <name>ADP-D-ribose</name>
        <dbReference type="ChEBI" id="CHEBI:57967"/>
    </ligand>
</feature>
<feature type="binding site" evidence="1">
    <location>
        <position position="112"/>
    </location>
    <ligand>
        <name>Zn(2+)</name>
        <dbReference type="ChEBI" id="CHEBI:29105"/>
    </ligand>
</feature>
<feature type="binding site" evidence="1">
    <location>
        <position position="117"/>
    </location>
    <ligand>
        <name>Zn(2+)</name>
        <dbReference type="ChEBI" id="CHEBI:29105"/>
    </ligand>
</feature>
<feature type="binding site" evidence="1">
    <location>
        <position position="119"/>
    </location>
    <ligand>
        <name>ADP-D-ribose</name>
        <dbReference type="ChEBI" id="CHEBI:57967"/>
    </ligand>
</feature>
<feature type="binding site" evidence="1">
    <location>
        <position position="119"/>
    </location>
    <ligand>
        <name>Zn(2+)</name>
        <dbReference type="ChEBI" id="CHEBI:29105"/>
    </ligand>
</feature>
<feature type="binding site" evidence="1">
    <location>
        <position position="120"/>
    </location>
    <ligand>
        <name>ADP-D-ribose</name>
        <dbReference type="ChEBI" id="CHEBI:57967"/>
    </ligand>
</feature>
<feature type="binding site" evidence="1">
    <location>
        <position position="121"/>
    </location>
    <ligand>
        <name>ADP-D-ribose</name>
        <dbReference type="ChEBI" id="CHEBI:57967"/>
    </ligand>
</feature>
<feature type="binding site" evidence="1">
    <location>
        <position position="212"/>
    </location>
    <ligand>
        <name>ADP-D-ribose</name>
        <dbReference type="ChEBI" id="CHEBI:57967"/>
    </ligand>
</feature>
<feature type="binding site" evidence="1">
    <location>
        <position position="213"/>
    </location>
    <ligand>
        <name>ADP-D-ribose</name>
        <dbReference type="ChEBI" id="CHEBI:57967"/>
    </ligand>
</feature>
<feature type="binding site" evidence="1">
    <location>
        <position position="214"/>
    </location>
    <ligand>
        <name>ADP-D-ribose</name>
        <dbReference type="ChEBI" id="CHEBI:57967"/>
    </ligand>
</feature>
<feature type="binding site" evidence="1">
    <location>
        <position position="215"/>
    </location>
    <ligand>
        <name>ADP-D-ribose</name>
        <dbReference type="ChEBI" id="CHEBI:57967"/>
    </ligand>
</feature>
<feature type="binding site" evidence="1">
    <location>
        <position position="216"/>
    </location>
    <ligand>
        <name>ADP-D-ribose</name>
        <dbReference type="ChEBI" id="CHEBI:57967"/>
    </ligand>
</feature>
<accession>Q5XC09</accession>
<reference key="1">
    <citation type="journal article" date="2004" name="J. Infect. Dis.">
        <title>Progress toward characterization of the group A Streptococcus metagenome: complete genome sequence of a macrolide-resistant serotype M6 strain.</title>
        <authorList>
            <person name="Banks D.J."/>
            <person name="Porcella S.F."/>
            <person name="Barbian K.D."/>
            <person name="Beres S.B."/>
            <person name="Philips L.E."/>
            <person name="Voyich J.M."/>
            <person name="DeLeo F.R."/>
            <person name="Martin J.M."/>
            <person name="Somerville G.A."/>
            <person name="Musser J.M."/>
        </authorList>
    </citation>
    <scope>NUCLEOTIDE SEQUENCE [LARGE SCALE GENOMIC DNA]</scope>
    <source>
        <strain>ATCC BAA-946 / MGAS10394</strain>
    </source>
</reference>
<keyword id="KW-0326">Glycosidase</keyword>
<keyword id="KW-0378">Hydrolase</keyword>
<keyword id="KW-0479">Metal-binding</keyword>
<keyword id="KW-0862">Zinc</keyword>
<organism>
    <name type="scientific">Streptococcus pyogenes serotype M6 (strain ATCC BAA-946 / MGAS10394)</name>
    <dbReference type="NCBI Taxonomy" id="286636"/>
    <lineage>
        <taxon>Bacteria</taxon>
        <taxon>Bacillati</taxon>
        <taxon>Bacillota</taxon>
        <taxon>Bacilli</taxon>
        <taxon>Lactobacillales</taxon>
        <taxon>Streptococcaceae</taxon>
        <taxon>Streptococcus</taxon>
    </lineage>
</organism>
<name>ADPRH_STRP6</name>
<proteinExistence type="inferred from homology"/>
<gene>
    <name type="ordered locus">M6_Spy0919</name>
</gene>
<comment type="function">
    <text evidence="1">ADP-ribosylhydrolase that specifically reverses the SirTM-mediated mono-ADP-ribosylation at an asparatate residue of GcvH-L, by releasing ADP-ribose from the target protein (By similarity). May play a role in the regulation of the response to host-induced oxidative stress (By similarity).</text>
</comment>
<comment type="catalytic activity">
    <reaction evidence="1">
        <text>4-O-(ADP-D-ribosyl)-L-aspartyl-[protein] + H2O = L-aspartyl-[protein] + ADP-D-ribose + H(+)</text>
        <dbReference type="Rhea" id="RHEA:54428"/>
        <dbReference type="Rhea" id="RHEA-COMP:9867"/>
        <dbReference type="Rhea" id="RHEA-COMP:13832"/>
        <dbReference type="ChEBI" id="CHEBI:15377"/>
        <dbReference type="ChEBI" id="CHEBI:15378"/>
        <dbReference type="ChEBI" id="CHEBI:29961"/>
        <dbReference type="ChEBI" id="CHEBI:57967"/>
        <dbReference type="ChEBI" id="CHEBI:138102"/>
    </reaction>
    <physiologicalReaction direction="left-to-right" evidence="1">
        <dbReference type="Rhea" id="RHEA:54429"/>
    </physiologicalReaction>
</comment>
<comment type="cofactor">
    <cofactor evidence="1">
        <name>Zn(2+)</name>
        <dbReference type="ChEBI" id="CHEBI:29105"/>
    </cofactor>
    <text evidence="1">Binds 1 Zn(2+) ion per subunit.</text>
</comment>
<comment type="similarity">
    <text evidence="3">Belongs to the MacroD-type family. Zn-Macro subfamily.</text>
</comment>